<comment type="function">
    <text evidence="2 3 6">K(+) channel that conducts outward rectifying tonic currents potentiated by purinergic signals (By similarity) (PubMed:30472253). Homo- and heterodimerizes to form functional channels with distinct regulatory and gating properties (By similarity). Contributes most of K(+) currents at the plasma membrane of resting microglia. Maintains a depolarized membrane potential required for proper ramified microglia morphology and phagocytosis, selectively mediating microglial pruning of presynaptic compartments at hippocampal excitatory synapses (By similarity). Upon local release of ATP caused by neuronal injury or infection, it is potentiated by purinergic signaling and contributes to ATP-triggered K(+) efflux underlying microglial NLRP3 inflammasome assembly and IL1B release (By similarity).</text>
</comment>
<comment type="catalytic activity">
    <reaction evidence="6">
        <text>K(+)(in) = K(+)(out)</text>
        <dbReference type="Rhea" id="RHEA:29463"/>
        <dbReference type="ChEBI" id="CHEBI:29103"/>
    </reaction>
</comment>
<comment type="activity regulation">
    <text evidence="6">The channel conductance is activated by arachidonic acid and inhibited by Ba(2+) ions, volatile anesthetics such as halothane and antiarrhythmic drug mexiletine. Insensitive to extracellular pH change.</text>
</comment>
<comment type="subunit">
    <text evidence="3">Homodimer. Heterodimer.</text>
</comment>
<comment type="subcellular location">
    <subcellularLocation>
        <location evidence="3">Cell membrane</location>
        <topology evidence="4">Multi-pass membrane protein</topology>
    </subcellularLocation>
</comment>
<comment type="tissue specificity">
    <text evidence="6">Brain and heart.</text>
</comment>
<comment type="domain">
    <text evidence="1">Each subunit contributes two pore-forming domains 1 and 2 which assemble to form a single pore with M2 and M4 transmembrane helices lining the central cavity and M1 and M3 facing the lipid bilayer. The transmembrane helices are bridged by the selectivity filters 1 and 2 that coordinate the permeant ions. Up to four ions can simultaneously occupy the selectivity filter and at least two elementary charges must translocate across the filter to convert it into the open conformation.</text>
</comment>
<comment type="similarity">
    <text evidence="8">Belongs to the two pore domain potassium channel (TC 1.A.1.8) family.</text>
</comment>
<reference key="1">
    <citation type="journal article" date="2013" name="Nature">
        <title>The zebrafish reference genome sequence and its relationship to the human genome.</title>
        <authorList>
            <person name="Howe K."/>
            <person name="Clark M.D."/>
            <person name="Torroja C.F."/>
            <person name="Torrance J."/>
            <person name="Berthelot C."/>
            <person name="Muffato M."/>
            <person name="Collins J.E."/>
            <person name="Humphray S."/>
            <person name="McLaren K."/>
            <person name="Matthews L."/>
            <person name="McLaren S."/>
            <person name="Sealy I."/>
            <person name="Caccamo M."/>
            <person name="Churcher C."/>
            <person name="Scott C."/>
            <person name="Barrett J.C."/>
            <person name="Koch R."/>
            <person name="Rauch G.J."/>
            <person name="White S."/>
            <person name="Chow W."/>
            <person name="Kilian B."/>
            <person name="Quintais L.T."/>
            <person name="Guerra-Assuncao J.A."/>
            <person name="Zhou Y."/>
            <person name="Gu Y."/>
            <person name="Yen J."/>
            <person name="Vogel J.H."/>
            <person name="Eyre T."/>
            <person name="Redmond S."/>
            <person name="Banerjee R."/>
            <person name="Chi J."/>
            <person name="Fu B."/>
            <person name="Langley E."/>
            <person name="Maguire S.F."/>
            <person name="Laird G.K."/>
            <person name="Lloyd D."/>
            <person name="Kenyon E."/>
            <person name="Donaldson S."/>
            <person name="Sehra H."/>
            <person name="Almeida-King J."/>
            <person name="Loveland J."/>
            <person name="Trevanion S."/>
            <person name="Jones M."/>
            <person name="Quail M."/>
            <person name="Willey D."/>
            <person name="Hunt A."/>
            <person name="Burton J."/>
            <person name="Sims S."/>
            <person name="McLay K."/>
            <person name="Plumb B."/>
            <person name="Davis J."/>
            <person name="Clee C."/>
            <person name="Oliver K."/>
            <person name="Clark R."/>
            <person name="Riddle C."/>
            <person name="Elliot D."/>
            <person name="Threadgold G."/>
            <person name="Harden G."/>
            <person name="Ware D."/>
            <person name="Begum S."/>
            <person name="Mortimore B."/>
            <person name="Kerry G."/>
            <person name="Heath P."/>
            <person name="Phillimore B."/>
            <person name="Tracey A."/>
            <person name="Corby N."/>
            <person name="Dunn M."/>
            <person name="Johnson C."/>
            <person name="Wood J."/>
            <person name="Clark S."/>
            <person name="Pelan S."/>
            <person name="Griffiths G."/>
            <person name="Smith M."/>
            <person name="Glithero R."/>
            <person name="Howden P."/>
            <person name="Barker N."/>
            <person name="Lloyd C."/>
            <person name="Stevens C."/>
            <person name="Harley J."/>
            <person name="Holt K."/>
            <person name="Panagiotidis G."/>
            <person name="Lovell J."/>
            <person name="Beasley H."/>
            <person name="Henderson C."/>
            <person name="Gordon D."/>
            <person name="Auger K."/>
            <person name="Wright D."/>
            <person name="Collins J."/>
            <person name="Raisen C."/>
            <person name="Dyer L."/>
            <person name="Leung K."/>
            <person name="Robertson L."/>
            <person name="Ambridge K."/>
            <person name="Leongamornlert D."/>
            <person name="McGuire S."/>
            <person name="Gilderthorp R."/>
            <person name="Griffiths C."/>
            <person name="Manthravadi D."/>
            <person name="Nichol S."/>
            <person name="Barker G."/>
            <person name="Whitehead S."/>
            <person name="Kay M."/>
            <person name="Brown J."/>
            <person name="Murnane C."/>
            <person name="Gray E."/>
            <person name="Humphries M."/>
            <person name="Sycamore N."/>
            <person name="Barker D."/>
            <person name="Saunders D."/>
            <person name="Wallis J."/>
            <person name="Babbage A."/>
            <person name="Hammond S."/>
            <person name="Mashreghi-Mohammadi M."/>
            <person name="Barr L."/>
            <person name="Martin S."/>
            <person name="Wray P."/>
            <person name="Ellington A."/>
            <person name="Matthews N."/>
            <person name="Ellwood M."/>
            <person name="Woodmansey R."/>
            <person name="Clark G."/>
            <person name="Cooper J."/>
            <person name="Tromans A."/>
            <person name="Grafham D."/>
            <person name="Skuce C."/>
            <person name="Pandian R."/>
            <person name="Andrews R."/>
            <person name="Harrison E."/>
            <person name="Kimberley A."/>
            <person name="Garnett J."/>
            <person name="Fosker N."/>
            <person name="Hall R."/>
            <person name="Garner P."/>
            <person name="Kelly D."/>
            <person name="Bird C."/>
            <person name="Palmer S."/>
            <person name="Gehring I."/>
            <person name="Berger A."/>
            <person name="Dooley C.M."/>
            <person name="Ersan-Urun Z."/>
            <person name="Eser C."/>
            <person name="Geiger H."/>
            <person name="Geisler M."/>
            <person name="Karotki L."/>
            <person name="Kirn A."/>
            <person name="Konantz J."/>
            <person name="Konantz M."/>
            <person name="Oberlander M."/>
            <person name="Rudolph-Geiger S."/>
            <person name="Teucke M."/>
            <person name="Lanz C."/>
            <person name="Raddatz G."/>
            <person name="Osoegawa K."/>
            <person name="Zhu B."/>
            <person name="Rapp A."/>
            <person name="Widaa S."/>
            <person name="Langford C."/>
            <person name="Yang F."/>
            <person name="Schuster S.C."/>
            <person name="Carter N.P."/>
            <person name="Harrow J."/>
            <person name="Ning Z."/>
            <person name="Herrero J."/>
            <person name="Searle S.M."/>
            <person name="Enright A."/>
            <person name="Geisler R."/>
            <person name="Plasterk R.H."/>
            <person name="Lee C."/>
            <person name="Westerfield M."/>
            <person name="de Jong P.J."/>
            <person name="Zon L.I."/>
            <person name="Postlethwait J.H."/>
            <person name="Nusslein-Volhard C."/>
            <person name="Hubbard T.J."/>
            <person name="Roest Crollius H."/>
            <person name="Rogers J."/>
            <person name="Stemple D.L."/>
        </authorList>
    </citation>
    <scope>NUCLEOTIDE SEQUENCE [LARGE SCALE GENOMIC DNA]</scope>
    <source>
        <strain>Tuebingen</strain>
    </source>
</reference>
<reference key="2">
    <citation type="submission" date="2006-04" db="EMBL/GenBank/DDBJ databases">
        <authorList>
            <consortium name="NIH - Zebrafish Gene Collection (ZGC) project"/>
        </authorList>
    </citation>
    <scope>NUCLEOTIDE SEQUENCE [LARGE SCALE MRNA]</scope>
</reference>
<reference key="3">
    <citation type="journal article" date="2019" name="J. Mol. Cell. Cardiol.">
        <title>Cloning and characterization of zebrafish K2P13.1 (THIK-1) two-pore-domain K+ channels.</title>
        <authorList>
            <person name="Staudacher I."/>
            <person name="Seehausen S."/>
            <person name="Gierten J."/>
            <person name="Illg C."/>
            <person name="Schweizer P.A."/>
            <person name="Katus H.A."/>
            <person name="Thomas D."/>
        </authorList>
    </citation>
    <scope>FUNCTION</scope>
    <scope>TRANSPORTER ACTIVITY</scope>
    <scope>ACTIVITY REGULATION</scope>
    <scope>TISSUE SPECIFICITY</scope>
    <source>
        <strain>Tuebingen</strain>
    </source>
</reference>
<protein>
    <recommendedName>
        <fullName>Potassium channel, subfamily K, member 13</fullName>
        <shortName>K2P13.1b</shortName>
    </recommendedName>
    <alternativeName>
        <fullName>Tandem pore domain halothane-inhibited potassium channel</fullName>
    </alternativeName>
</protein>
<keyword id="KW-1003">Cell membrane</keyword>
<keyword id="KW-0407">Ion channel</keyword>
<keyword id="KW-0406">Ion transport</keyword>
<keyword id="KW-0472">Membrane</keyword>
<keyword id="KW-0479">Metal-binding</keyword>
<keyword id="KW-0630">Potassium</keyword>
<keyword id="KW-0631">Potassium channel</keyword>
<keyword id="KW-0633">Potassium transport</keyword>
<keyword id="KW-1185">Reference proteome</keyword>
<keyword id="KW-0812">Transmembrane</keyword>
<keyword id="KW-1133">Transmembrane helix</keyword>
<keyword id="KW-0813">Transport</keyword>
<keyword id="KW-0851">Voltage-gated channel</keyword>
<accession>Q5VSE6</accession>
<accession>B3DKA2</accession>
<gene>
    <name evidence="7" type="primary">kcnk13b</name>
    <name type="synonym">kcnk13</name>
</gene>
<name>KCNKD_DANRE</name>
<feature type="chain" id="PRO_0000461304" description="Potassium channel, subfamily K, member 13">
    <location>
        <begin position="1"/>
        <end position="412"/>
    </location>
</feature>
<feature type="topological domain" description="Cytoplasmic" evidence="4">
    <location>
        <begin position="1"/>
        <end position="21"/>
    </location>
</feature>
<feature type="transmembrane region" description="Helical" evidence="4">
    <location>
        <begin position="22"/>
        <end position="42"/>
    </location>
</feature>
<feature type="intramembrane region" description="Pore-forming; Name=Pore-forming 1" evidence="4">
    <location>
        <begin position="97"/>
        <end position="117"/>
    </location>
</feature>
<feature type="transmembrane region" description="Helical" evidence="4">
    <location>
        <begin position="127"/>
        <end position="147"/>
    </location>
</feature>
<feature type="topological domain" description="Cytoplasmic" evidence="4">
    <location>
        <begin position="148"/>
        <end position="198"/>
    </location>
</feature>
<feature type="transmembrane region" description="Helical" evidence="4">
    <location>
        <begin position="199"/>
        <end position="219"/>
    </location>
</feature>
<feature type="intramembrane region" description="Pore-forming; Name=Pore-forming 2" evidence="4">
    <location>
        <begin position="229"/>
        <end position="249"/>
    </location>
</feature>
<feature type="transmembrane region" description="Helical" evidence="4">
    <location>
        <begin position="268"/>
        <end position="288"/>
    </location>
</feature>
<feature type="topological domain" description="Cytoplasmic" evidence="4">
    <location>
        <begin position="289"/>
        <end position="412"/>
    </location>
</feature>
<feature type="region of interest" description="Selectivity filter 1" evidence="1">
    <location>
        <begin position="112"/>
        <end position="117"/>
    </location>
</feature>
<feature type="region of interest" description="Selectivity filter 2" evidence="1">
    <location>
        <begin position="242"/>
        <end position="247"/>
    </location>
</feature>
<feature type="region of interest" description="Disordered" evidence="5">
    <location>
        <begin position="374"/>
        <end position="395"/>
    </location>
</feature>
<feature type="compositionally biased region" description="Polar residues" evidence="5">
    <location>
        <begin position="374"/>
        <end position="386"/>
    </location>
</feature>
<feature type="binding site" evidence="1">
    <location>
        <position position="112"/>
    </location>
    <ligand>
        <name>K(+)</name>
        <dbReference type="ChEBI" id="CHEBI:29103"/>
        <label>1</label>
    </ligand>
</feature>
<feature type="binding site" evidence="1">
    <location>
        <position position="112"/>
    </location>
    <ligand>
        <name>K(+)</name>
        <dbReference type="ChEBI" id="CHEBI:29103"/>
        <label>4</label>
    </ligand>
</feature>
<feature type="binding site" evidence="1">
    <location>
        <position position="113"/>
    </location>
    <ligand>
        <name>K(+)</name>
        <dbReference type="ChEBI" id="CHEBI:29103"/>
        <label>1</label>
    </ligand>
</feature>
<feature type="binding site" evidence="1">
    <location>
        <position position="113"/>
    </location>
    <ligand>
        <name>K(+)</name>
        <dbReference type="ChEBI" id="CHEBI:29103"/>
        <label>2</label>
    </ligand>
</feature>
<feature type="binding site" evidence="1">
    <location>
        <position position="114"/>
    </location>
    <ligand>
        <name>K(+)</name>
        <dbReference type="ChEBI" id="CHEBI:29103"/>
        <label>2</label>
    </ligand>
</feature>
<feature type="binding site" evidence="1">
    <location>
        <position position="114"/>
    </location>
    <ligand>
        <name>K(+)</name>
        <dbReference type="ChEBI" id="CHEBI:29103"/>
        <label>3</label>
    </ligand>
</feature>
<feature type="binding site" evidence="1">
    <location>
        <position position="242"/>
    </location>
    <ligand>
        <name>K(+)</name>
        <dbReference type="ChEBI" id="CHEBI:29103"/>
        <label>1</label>
    </ligand>
</feature>
<feature type="binding site" evidence="1">
    <location>
        <position position="242"/>
    </location>
    <ligand>
        <name>K(+)</name>
        <dbReference type="ChEBI" id="CHEBI:29103"/>
        <label>4</label>
    </ligand>
</feature>
<feature type="binding site" evidence="1">
    <location>
        <position position="243"/>
    </location>
    <ligand>
        <name>K(+)</name>
        <dbReference type="ChEBI" id="CHEBI:29103"/>
        <label>1</label>
    </ligand>
</feature>
<feature type="binding site" evidence="1">
    <location>
        <position position="243"/>
    </location>
    <ligand>
        <name>K(+)</name>
        <dbReference type="ChEBI" id="CHEBI:29103"/>
        <label>2</label>
    </ligand>
</feature>
<feature type="binding site" evidence="1">
    <location>
        <position position="244"/>
    </location>
    <ligand>
        <name>K(+)</name>
        <dbReference type="ChEBI" id="CHEBI:29103"/>
        <label>2</label>
    </ligand>
</feature>
<feature type="binding site" evidence="1">
    <location>
        <position position="244"/>
    </location>
    <ligand>
        <name>K(+)</name>
        <dbReference type="ChEBI" id="CHEBI:29103"/>
        <label>3</label>
    </ligand>
</feature>
<feature type="binding site" evidence="1">
    <location>
        <position position="245"/>
    </location>
    <ligand>
        <name>K(+)</name>
        <dbReference type="ChEBI" id="CHEBI:29103"/>
        <label>3</label>
    </ligand>
</feature>
<organism>
    <name type="scientific">Danio rerio</name>
    <name type="common">Zebrafish</name>
    <name type="synonym">Brachydanio rerio</name>
    <dbReference type="NCBI Taxonomy" id="7955"/>
    <lineage>
        <taxon>Eukaryota</taxon>
        <taxon>Metazoa</taxon>
        <taxon>Chordata</taxon>
        <taxon>Craniata</taxon>
        <taxon>Vertebrata</taxon>
        <taxon>Euteleostomi</taxon>
        <taxon>Actinopterygii</taxon>
        <taxon>Neopterygii</taxon>
        <taxon>Teleostei</taxon>
        <taxon>Ostariophysi</taxon>
        <taxon>Cypriniformes</taxon>
        <taxon>Danionidae</taxon>
        <taxon>Danioninae</taxon>
        <taxon>Danio</taxon>
    </lineage>
</organism>
<sequence>MACRSGCCCNSIGSFNEDNARFLMLALLIIIYLLCGAAVFSALEQPKEKLAKERWAQRIEQFTNKYNLSQDDLKNFLRNYEEANVAGIRVDATRARWDFAGAFYFVGTVVSTIGFGMTTPVTIAGKIFLIFYGLIGCAATILFFNLFLERVITVIAFVLKFCHERRESRKAGPTQNCRRPSTDNRDRRTDSLAGWKPSVYCVMLILGVAAILVSCCASAMYSAAEGWDYLDALYFCFVAFSTIGFGDMVSNQREIYEAQVAYRVGNFLFILTGVCCIYSLFNVISIVIKQVLNWLLRRLETPCHCPGRGNRHPRRNAVVPGHMRSRRENSIETDAVNDSEADGRRMSGEMISMKDFLAANKVNLAIMQKQLSEMANGHPRQSGSSSRHNEFSGGVGALGIMNNRLAETSVDR</sequence>
<dbReference type="EMBL" id="AL935145">
    <property type="status" value="NOT_ANNOTATED_CDS"/>
    <property type="molecule type" value="Genomic_DNA"/>
</dbReference>
<dbReference type="EMBL" id="BC163776">
    <property type="protein sequence ID" value="AAI63776.1"/>
    <property type="molecule type" value="mRNA"/>
</dbReference>
<dbReference type="EMBL" id="BC163778">
    <property type="protein sequence ID" value="AAI63778.1"/>
    <property type="molecule type" value="mRNA"/>
</dbReference>
<dbReference type="RefSeq" id="NP_001020654.1">
    <property type="nucleotide sequence ID" value="NM_001025483.1"/>
</dbReference>
<dbReference type="SMR" id="Q5VSE6"/>
<dbReference type="FunCoup" id="Q5VSE6">
    <property type="interactions" value="18"/>
</dbReference>
<dbReference type="STRING" id="7955.ENSDARP00000008922"/>
<dbReference type="PaxDb" id="7955-ENSDARP00000008922"/>
<dbReference type="GeneID" id="556073"/>
<dbReference type="KEGG" id="dre:556073"/>
<dbReference type="AGR" id="ZFIN:ZDB-GENE-040724-105"/>
<dbReference type="CTD" id="556073"/>
<dbReference type="ZFIN" id="ZDB-GENE-040724-105">
    <property type="gene designation" value="kcnk13b"/>
</dbReference>
<dbReference type="eggNOG" id="KOG4404">
    <property type="taxonomic scope" value="Eukaryota"/>
</dbReference>
<dbReference type="HOGENOM" id="CLU_022504_3_1_1"/>
<dbReference type="OMA" id="EAPCRCC"/>
<dbReference type="OrthoDB" id="297496at2759"/>
<dbReference type="TreeFam" id="TF313947"/>
<dbReference type="Proteomes" id="UP000000437">
    <property type="component" value="Chromosome 20"/>
</dbReference>
<dbReference type="GO" id="GO:0034702">
    <property type="term" value="C:monoatomic ion channel complex"/>
    <property type="evidence" value="ECO:0007669"/>
    <property type="project" value="UniProtKB-KW"/>
</dbReference>
<dbReference type="GO" id="GO:0005886">
    <property type="term" value="C:plasma membrane"/>
    <property type="evidence" value="ECO:0000250"/>
    <property type="project" value="UniProtKB"/>
</dbReference>
<dbReference type="GO" id="GO:0042802">
    <property type="term" value="F:identical protein binding"/>
    <property type="evidence" value="ECO:0000250"/>
    <property type="project" value="UniProtKB"/>
</dbReference>
<dbReference type="GO" id="GO:0046872">
    <property type="term" value="F:metal ion binding"/>
    <property type="evidence" value="ECO:0007669"/>
    <property type="project" value="UniProtKB-KW"/>
</dbReference>
<dbReference type="GO" id="GO:0015271">
    <property type="term" value="F:outward rectifier potassium channel activity"/>
    <property type="evidence" value="ECO:0000314"/>
    <property type="project" value="ZFIN"/>
</dbReference>
<dbReference type="GO" id="GO:0022841">
    <property type="term" value="F:potassium ion leak channel activity"/>
    <property type="evidence" value="ECO:0000318"/>
    <property type="project" value="GO_Central"/>
</dbReference>
<dbReference type="GO" id="GO:0046982">
    <property type="term" value="F:protein heterodimerization activity"/>
    <property type="evidence" value="ECO:0000250"/>
    <property type="project" value="UniProtKB"/>
</dbReference>
<dbReference type="GO" id="GO:0071805">
    <property type="term" value="P:potassium ion transmembrane transport"/>
    <property type="evidence" value="ECO:0000318"/>
    <property type="project" value="GO_Central"/>
</dbReference>
<dbReference type="GO" id="GO:1905810">
    <property type="term" value="P:regulation of excitatory synapse pruning"/>
    <property type="evidence" value="ECO:0000250"/>
    <property type="project" value="UniProtKB"/>
</dbReference>
<dbReference type="GO" id="GO:1900225">
    <property type="term" value="P:regulation of NLRP3 inflammasome complex assembly"/>
    <property type="evidence" value="ECO:0000250"/>
    <property type="project" value="UniProtKB"/>
</dbReference>
<dbReference type="GO" id="GO:0060075">
    <property type="term" value="P:regulation of resting membrane potential"/>
    <property type="evidence" value="ECO:0000250"/>
    <property type="project" value="UniProtKB"/>
</dbReference>
<dbReference type="FunFam" id="1.10.287.70:FF:000070">
    <property type="entry name" value="Potassium channel, subfamily K, member 12 like"/>
    <property type="match status" value="1"/>
</dbReference>
<dbReference type="Gene3D" id="1.10.287.70">
    <property type="match status" value="1"/>
</dbReference>
<dbReference type="InterPro" id="IPR003280">
    <property type="entry name" value="2pore_dom_K_chnl"/>
</dbReference>
<dbReference type="InterPro" id="IPR005410">
    <property type="entry name" value="2pore_dom_K_chnl_THIK"/>
</dbReference>
<dbReference type="InterPro" id="IPR013099">
    <property type="entry name" value="K_chnl_dom"/>
</dbReference>
<dbReference type="PANTHER" id="PTHR11003">
    <property type="entry name" value="POTASSIUM CHANNEL, SUBFAMILY K"/>
    <property type="match status" value="1"/>
</dbReference>
<dbReference type="PANTHER" id="PTHR11003:SF314">
    <property type="entry name" value="POTASSIUM CHANNEL, SUBFAMILY K, MEMBER 13"/>
    <property type="match status" value="1"/>
</dbReference>
<dbReference type="Pfam" id="PF07885">
    <property type="entry name" value="Ion_trans_2"/>
    <property type="match status" value="2"/>
</dbReference>
<dbReference type="PRINTS" id="PR01333">
    <property type="entry name" value="2POREKCHANEL"/>
</dbReference>
<dbReference type="PRINTS" id="PR01588">
    <property type="entry name" value="THIKCHANNEL"/>
</dbReference>
<dbReference type="SUPFAM" id="SSF81324">
    <property type="entry name" value="Voltage-gated potassium channels"/>
    <property type="match status" value="2"/>
</dbReference>
<evidence type="ECO:0000250" key="1">
    <source>
        <dbReference type="UniProtKB" id="P57789"/>
    </source>
</evidence>
<evidence type="ECO:0000250" key="2">
    <source>
        <dbReference type="UniProtKB" id="Q8R1P5"/>
    </source>
</evidence>
<evidence type="ECO:0000250" key="3">
    <source>
        <dbReference type="UniProtKB" id="Q9HB14"/>
    </source>
</evidence>
<evidence type="ECO:0000255" key="4"/>
<evidence type="ECO:0000256" key="5">
    <source>
        <dbReference type="SAM" id="MobiDB-lite"/>
    </source>
</evidence>
<evidence type="ECO:0000269" key="6">
    <source>
    </source>
</evidence>
<evidence type="ECO:0000303" key="7">
    <source>
    </source>
</evidence>
<evidence type="ECO:0000305" key="8"/>
<proteinExistence type="evidence at transcript level"/>